<sequence length="364" mass="39983">MKRYLVLEDGTIYPGTGFGATTATVGELVFNTGMSGYQESITDQSYNGEILMFTYPLIGNYGINRDDHESIKPTCKGVVVHEVARRASNWRNAQSLDDYLKQNAIPGIMDIDTRAVTKHIRTKGAMKATIVDNVLPDTVDRLKVTELNRAVVAQSSTNNAYPNPATGPNVVVVDFGLKHSILRELAKRQCNLTVLPYNTTASEIMALNPDGVMLTNGPGDPKDVPGALEMIREVEKHVPLFGICLGHQLFALANGADTFKMKFGHRGFNHPVREIATGRIDFTSQNHGYAVDRDSLAQTDLLITHEEINDGTVEGLRHRDYAAFSVQYHPDAAPGPHDADHIFDEFIDLMAANQATQKGSQFNA</sequence>
<reference key="1">
    <citation type="journal article" date="1996" name="Gene">
        <title>Structure and organisation of the pyrimidine biosynthesis pathway genes in Lactobacillus plantarum: a PCR strategy for sequencing without cloning.</title>
        <authorList>
            <person name="Elagoez A."/>
            <person name="Abdi A."/>
            <person name="Hubert J.-C."/>
            <person name="Kammerer B."/>
        </authorList>
    </citation>
    <scope>NUCLEOTIDE SEQUENCE [GENOMIC DNA]</scope>
    <source>
        <strain>ATCC 8014 / CCM 1904 / DSM 20205 / NCDO 82 / NCIB 6376</strain>
    </source>
</reference>
<reference key="2">
    <citation type="journal article" date="2003" name="Proc. Natl. Acad. Sci. U.S.A.">
        <title>Complete genome sequence of Lactobacillus plantarum WCFS1.</title>
        <authorList>
            <person name="Kleerebezem M."/>
            <person name="Boekhorst J."/>
            <person name="van Kranenburg R."/>
            <person name="Molenaar D."/>
            <person name="Kuipers O.P."/>
            <person name="Leer R."/>
            <person name="Tarchini R."/>
            <person name="Peters S.A."/>
            <person name="Sandbrink H.M."/>
            <person name="Fiers M.W.E.J."/>
            <person name="Stiekema W."/>
            <person name="Klein Lankhorst R.M."/>
            <person name="Bron P.A."/>
            <person name="Hoffer S.M."/>
            <person name="Nierop Groot M.N."/>
            <person name="Kerkhoven R."/>
            <person name="De Vries M."/>
            <person name="Ursing B."/>
            <person name="De Vos W.M."/>
            <person name="Siezen R.J."/>
        </authorList>
    </citation>
    <scope>NUCLEOTIDE SEQUENCE [LARGE SCALE GENOMIC DNA]</scope>
    <source>
        <strain>ATCC BAA-793 / NCIMB 8826 / WCFS1</strain>
    </source>
</reference>
<reference key="3">
    <citation type="journal article" date="2012" name="J. Bacteriol.">
        <title>Complete resequencing and reannotation of the Lactobacillus plantarum WCFS1 genome.</title>
        <authorList>
            <person name="Siezen R.J."/>
            <person name="Francke C."/>
            <person name="Renckens B."/>
            <person name="Boekhorst J."/>
            <person name="Wels M."/>
            <person name="Kleerebezem M."/>
            <person name="van Hijum S.A."/>
        </authorList>
    </citation>
    <scope>NUCLEOTIDE SEQUENCE [LARGE SCALE GENOMIC DNA]</scope>
    <scope>GENOME REANNOTATION</scope>
    <source>
        <strain>ATCC BAA-793 / NCIMB 8826 / WCFS1</strain>
    </source>
</reference>
<reference key="4">
    <citation type="journal article" date="2000" name="J. Bacteriol.">
        <title>In Lactobacillus plantarum, carbamoyl phosphate is synthesized by two carbamoyl-phosphate synthetases (CPS): carbon dioxide differentiates the arginine-repressed from the pyrimidine-regulated CPS.</title>
        <authorList>
            <person name="Nicoloff H."/>
            <person name="Hubert J.-C."/>
            <person name="Bringel F."/>
        </authorList>
    </citation>
    <scope>FUNCTION</scope>
    <source>
        <strain>ATCC 8014 / CCM 1904 / DSM 20205 / NCDO 82 / NCIB 6376</strain>
    </source>
</reference>
<comment type="function">
    <text evidence="2">Small subunit of the glutamine-dependent carbamoyl phosphate synthetase (CPSase). CPSase catalyzes the formation of carbamoyl phosphate from the ammonia moiety of glutamine, carbonate, and phosphate donated by ATP, constituting the first step of the biosynthetic pathway leading to pyrimidine nucleotides. The small subunit (glutamine amidotransferase) binds and cleaves glutamine to supply the large subunit with the substrate ammonia.</text>
</comment>
<comment type="catalytic activity">
    <reaction evidence="1">
        <text>hydrogencarbonate + L-glutamine + 2 ATP + H2O = carbamoyl phosphate + L-glutamate + 2 ADP + phosphate + 2 H(+)</text>
        <dbReference type="Rhea" id="RHEA:18633"/>
        <dbReference type="ChEBI" id="CHEBI:15377"/>
        <dbReference type="ChEBI" id="CHEBI:15378"/>
        <dbReference type="ChEBI" id="CHEBI:17544"/>
        <dbReference type="ChEBI" id="CHEBI:29985"/>
        <dbReference type="ChEBI" id="CHEBI:30616"/>
        <dbReference type="ChEBI" id="CHEBI:43474"/>
        <dbReference type="ChEBI" id="CHEBI:58228"/>
        <dbReference type="ChEBI" id="CHEBI:58359"/>
        <dbReference type="ChEBI" id="CHEBI:456216"/>
        <dbReference type="EC" id="6.3.5.5"/>
    </reaction>
</comment>
<comment type="catalytic activity">
    <molecule>Carbamoyl phosphate synthase pyrimidine-specific small chain</molecule>
    <reaction evidence="1">
        <text>L-glutamine + H2O = L-glutamate + NH4(+)</text>
        <dbReference type="Rhea" id="RHEA:15889"/>
        <dbReference type="ChEBI" id="CHEBI:15377"/>
        <dbReference type="ChEBI" id="CHEBI:28938"/>
        <dbReference type="ChEBI" id="CHEBI:29985"/>
        <dbReference type="ChEBI" id="CHEBI:58359"/>
    </reaction>
</comment>
<comment type="activity regulation">
    <text>Inhibited by pyrimidine.</text>
</comment>
<comment type="pathway">
    <text evidence="1">Pyrimidine metabolism; UMP biosynthesis via de novo pathway; (S)-dihydroorotate from bicarbonate: step 1/3.</text>
</comment>
<comment type="subunit">
    <text evidence="1">Composed of two chains; the small (or glutamine) chain promotes the hydrolysis of glutamine to ammonia, which is used by the large (or ammonia) chain to synthesize carbamoyl phosphate. Tetramer of heterodimers (alpha,beta)4.</text>
</comment>
<comment type="similarity">
    <text evidence="1">Belongs to the CarA family.</text>
</comment>
<dbReference type="EC" id="6.3.5.5" evidence="1"/>
<dbReference type="EMBL" id="Z54240">
    <property type="protein sequence ID" value="CAA91004.1"/>
    <property type="molecule type" value="Genomic_DNA"/>
</dbReference>
<dbReference type="EMBL" id="AL935263">
    <property type="protein sequence ID" value="CCC79822.1"/>
    <property type="molecule type" value="Genomic_DNA"/>
</dbReference>
<dbReference type="RefSeq" id="WP_011101887.1">
    <property type="nucleotide sequence ID" value="NC_004567.2"/>
</dbReference>
<dbReference type="RefSeq" id="YP_004890336.1">
    <property type="nucleotide sequence ID" value="NC_004567.2"/>
</dbReference>
<dbReference type="SMR" id="P77885"/>
<dbReference type="STRING" id="220668.lp_2701"/>
<dbReference type="MEROPS" id="C26.963"/>
<dbReference type="EnsemblBacteria" id="CCC79822">
    <property type="protein sequence ID" value="CCC79822"/>
    <property type="gene ID" value="lp_2701"/>
</dbReference>
<dbReference type="KEGG" id="lpl:lp_2701"/>
<dbReference type="PATRIC" id="fig|220668.9.peg.2261"/>
<dbReference type="eggNOG" id="COG0505">
    <property type="taxonomic scope" value="Bacteria"/>
</dbReference>
<dbReference type="HOGENOM" id="CLU_035901_2_1_9"/>
<dbReference type="OrthoDB" id="9804328at2"/>
<dbReference type="PhylomeDB" id="P77885"/>
<dbReference type="UniPathway" id="UPA00070">
    <property type="reaction ID" value="UER00115"/>
</dbReference>
<dbReference type="Proteomes" id="UP000000432">
    <property type="component" value="Chromosome"/>
</dbReference>
<dbReference type="GO" id="GO:0005524">
    <property type="term" value="F:ATP binding"/>
    <property type="evidence" value="ECO:0007669"/>
    <property type="project" value="UniProtKB-UniRule"/>
</dbReference>
<dbReference type="GO" id="GO:0004088">
    <property type="term" value="F:carbamoyl-phosphate synthase (glutamine-hydrolyzing) activity"/>
    <property type="evidence" value="ECO:0007669"/>
    <property type="project" value="UniProtKB-UniRule"/>
</dbReference>
<dbReference type="GO" id="GO:0004359">
    <property type="term" value="F:glutaminase activity"/>
    <property type="evidence" value="ECO:0007669"/>
    <property type="project" value="RHEA"/>
</dbReference>
<dbReference type="GO" id="GO:0006207">
    <property type="term" value="P:'de novo' pyrimidine nucleobase biosynthetic process"/>
    <property type="evidence" value="ECO:0007669"/>
    <property type="project" value="InterPro"/>
</dbReference>
<dbReference type="GO" id="GO:0044205">
    <property type="term" value="P:'de novo' UMP biosynthetic process"/>
    <property type="evidence" value="ECO:0007669"/>
    <property type="project" value="UniProtKB-UniRule"/>
</dbReference>
<dbReference type="GO" id="GO:0006541">
    <property type="term" value="P:glutamine metabolic process"/>
    <property type="evidence" value="ECO:0007669"/>
    <property type="project" value="InterPro"/>
</dbReference>
<dbReference type="GO" id="GO:0006526">
    <property type="term" value="P:L-arginine biosynthetic process"/>
    <property type="evidence" value="ECO:0007669"/>
    <property type="project" value="UniProtKB-UniRule"/>
</dbReference>
<dbReference type="CDD" id="cd01744">
    <property type="entry name" value="GATase1_CPSase"/>
    <property type="match status" value="1"/>
</dbReference>
<dbReference type="FunFam" id="3.40.50.880:FF:000029">
    <property type="entry name" value="Carbamoyl-phosphate synthase small chain"/>
    <property type="match status" value="1"/>
</dbReference>
<dbReference type="FunFam" id="3.50.30.20:FF:000001">
    <property type="entry name" value="Carbamoyl-phosphate synthase small chain"/>
    <property type="match status" value="1"/>
</dbReference>
<dbReference type="Gene3D" id="3.40.50.880">
    <property type="match status" value="1"/>
</dbReference>
<dbReference type="Gene3D" id="3.50.30.20">
    <property type="entry name" value="Carbamoyl-phosphate synthase small subunit, N-terminal domain"/>
    <property type="match status" value="1"/>
</dbReference>
<dbReference type="HAMAP" id="MF_01209">
    <property type="entry name" value="CPSase_S_chain"/>
    <property type="match status" value="1"/>
</dbReference>
<dbReference type="InterPro" id="IPR050472">
    <property type="entry name" value="Anth_synth/Amidotransfase"/>
</dbReference>
<dbReference type="InterPro" id="IPR006274">
    <property type="entry name" value="CarbamoylP_synth_ssu"/>
</dbReference>
<dbReference type="InterPro" id="IPR002474">
    <property type="entry name" value="CarbamoylP_synth_ssu_N"/>
</dbReference>
<dbReference type="InterPro" id="IPR036480">
    <property type="entry name" value="CarbP_synth_ssu_N_sf"/>
</dbReference>
<dbReference type="InterPro" id="IPR029062">
    <property type="entry name" value="Class_I_gatase-like"/>
</dbReference>
<dbReference type="InterPro" id="IPR035686">
    <property type="entry name" value="CPSase_GATase1"/>
</dbReference>
<dbReference type="InterPro" id="IPR017926">
    <property type="entry name" value="GATASE"/>
</dbReference>
<dbReference type="NCBIfam" id="TIGR01368">
    <property type="entry name" value="CPSaseIIsmall"/>
    <property type="match status" value="1"/>
</dbReference>
<dbReference type="NCBIfam" id="NF009475">
    <property type="entry name" value="PRK12838.1"/>
    <property type="match status" value="1"/>
</dbReference>
<dbReference type="PANTHER" id="PTHR43418:SF7">
    <property type="entry name" value="CARBAMOYL-PHOSPHATE SYNTHASE SMALL CHAIN"/>
    <property type="match status" value="1"/>
</dbReference>
<dbReference type="PANTHER" id="PTHR43418">
    <property type="entry name" value="MULTIFUNCTIONAL TRYPTOPHAN BIOSYNTHESIS PROTEIN-RELATED"/>
    <property type="match status" value="1"/>
</dbReference>
<dbReference type="Pfam" id="PF00988">
    <property type="entry name" value="CPSase_sm_chain"/>
    <property type="match status" value="1"/>
</dbReference>
<dbReference type="Pfam" id="PF00117">
    <property type="entry name" value="GATase"/>
    <property type="match status" value="1"/>
</dbReference>
<dbReference type="PRINTS" id="PR00097">
    <property type="entry name" value="ANTSNTHASEII"/>
</dbReference>
<dbReference type="PRINTS" id="PR00099">
    <property type="entry name" value="CPSGATASE"/>
</dbReference>
<dbReference type="PRINTS" id="PR00096">
    <property type="entry name" value="GATASE"/>
</dbReference>
<dbReference type="SMART" id="SM01097">
    <property type="entry name" value="CPSase_sm_chain"/>
    <property type="match status" value="1"/>
</dbReference>
<dbReference type="SUPFAM" id="SSF52021">
    <property type="entry name" value="Carbamoyl phosphate synthetase, small subunit N-terminal domain"/>
    <property type="match status" value="1"/>
</dbReference>
<dbReference type="SUPFAM" id="SSF52317">
    <property type="entry name" value="Class I glutamine amidotransferase-like"/>
    <property type="match status" value="1"/>
</dbReference>
<dbReference type="PROSITE" id="PS51273">
    <property type="entry name" value="GATASE_TYPE_1"/>
    <property type="match status" value="1"/>
</dbReference>
<protein>
    <recommendedName>
        <fullName evidence="3">Carbamoyl phosphate synthase pyrimidine-specific small chain</fullName>
        <ecNumber evidence="1">6.3.5.5</ecNumber>
    </recommendedName>
    <alternativeName>
        <fullName evidence="1">Carbamoyl phosphate synthetase glutamine chain 2</fullName>
        <shortName>CPS-P</shortName>
    </alternativeName>
</protein>
<gene>
    <name evidence="1" type="primary">pyrAA</name>
    <name type="ordered locus">lp_2701</name>
</gene>
<organism>
    <name type="scientific">Lactiplantibacillus plantarum (strain ATCC BAA-793 / NCIMB 8826 / WCFS1)</name>
    <name type="common">Lactobacillus plantarum</name>
    <dbReference type="NCBI Taxonomy" id="220668"/>
    <lineage>
        <taxon>Bacteria</taxon>
        <taxon>Bacillati</taxon>
        <taxon>Bacillota</taxon>
        <taxon>Bacilli</taxon>
        <taxon>Lactobacillales</taxon>
        <taxon>Lactobacillaceae</taxon>
        <taxon>Lactiplantibacillus</taxon>
    </lineage>
</organism>
<proteinExistence type="inferred from homology"/>
<accession>P77885</accession>
<accession>F9URI3</accession>
<feature type="chain" id="PRO_0000112286" description="Carbamoyl phosphate synthase pyrimidine-specific small chain">
    <location>
        <begin position="1"/>
        <end position="364"/>
    </location>
</feature>
<feature type="domain" description="Glutamine amidotransferase type-1" evidence="1">
    <location>
        <begin position="169"/>
        <end position="356"/>
    </location>
</feature>
<feature type="region of interest" description="CPSase" evidence="1">
    <location>
        <begin position="1"/>
        <end position="169"/>
    </location>
</feature>
<feature type="active site" description="Nucleophile" evidence="1">
    <location>
        <position position="244"/>
    </location>
</feature>
<feature type="active site" evidence="1">
    <location>
        <position position="329"/>
    </location>
</feature>
<feature type="active site" evidence="1">
    <location>
        <position position="331"/>
    </location>
</feature>
<feature type="binding site" evidence="1">
    <location>
        <position position="45"/>
    </location>
    <ligand>
        <name>L-glutamine</name>
        <dbReference type="ChEBI" id="CHEBI:58359"/>
    </ligand>
</feature>
<feature type="binding site" evidence="1">
    <location>
        <position position="217"/>
    </location>
    <ligand>
        <name>L-glutamine</name>
        <dbReference type="ChEBI" id="CHEBI:58359"/>
    </ligand>
</feature>
<feature type="binding site" evidence="1">
    <location>
        <position position="219"/>
    </location>
    <ligand>
        <name>L-glutamine</name>
        <dbReference type="ChEBI" id="CHEBI:58359"/>
    </ligand>
</feature>
<feature type="binding site" evidence="1">
    <location>
        <position position="245"/>
    </location>
    <ligand>
        <name>L-glutamine</name>
        <dbReference type="ChEBI" id="CHEBI:58359"/>
    </ligand>
</feature>
<feature type="binding site" evidence="1">
    <location>
        <position position="248"/>
    </location>
    <ligand>
        <name>L-glutamine</name>
        <dbReference type="ChEBI" id="CHEBI:58359"/>
    </ligand>
</feature>
<feature type="binding site" evidence="1">
    <location>
        <position position="286"/>
    </location>
    <ligand>
        <name>L-glutamine</name>
        <dbReference type="ChEBI" id="CHEBI:58359"/>
    </ligand>
</feature>
<feature type="binding site" evidence="1">
    <location>
        <position position="288"/>
    </location>
    <ligand>
        <name>L-glutamine</name>
        <dbReference type="ChEBI" id="CHEBI:58359"/>
    </ligand>
</feature>
<feature type="binding site" evidence="1">
    <location>
        <position position="289"/>
    </location>
    <ligand>
        <name>L-glutamine</name>
        <dbReference type="ChEBI" id="CHEBI:58359"/>
    </ligand>
</feature>
<feature type="sequence conflict" description="In Ref. 1; CAA91004." evidence="3" ref="1">
    <original>V</original>
    <variation>I</variation>
    <location>
        <position position="144"/>
    </location>
</feature>
<keyword id="KW-0067">ATP-binding</keyword>
<keyword id="KW-0315">Glutamine amidotransferase</keyword>
<keyword id="KW-0436">Ligase</keyword>
<keyword id="KW-0547">Nucleotide-binding</keyword>
<keyword id="KW-0665">Pyrimidine biosynthesis</keyword>
<keyword id="KW-1185">Reference proteome</keyword>
<evidence type="ECO:0000255" key="1">
    <source>
        <dbReference type="HAMAP-Rule" id="MF_01209"/>
    </source>
</evidence>
<evidence type="ECO:0000269" key="2">
    <source>
    </source>
</evidence>
<evidence type="ECO:0000305" key="3"/>
<name>CARA_LACPL</name>